<protein>
    <recommendedName>
        <fullName>Acylphosphatase</fullName>
        <ecNumber>3.6.1.7</ecNumber>
    </recommendedName>
    <alternativeName>
        <fullName>Acylphosphate phosphohydrolase</fullName>
    </alternativeName>
</protein>
<comment type="catalytic activity">
    <reaction>
        <text>an acyl phosphate + H2O = a carboxylate + phosphate + H(+)</text>
        <dbReference type="Rhea" id="RHEA:14965"/>
        <dbReference type="ChEBI" id="CHEBI:15377"/>
        <dbReference type="ChEBI" id="CHEBI:15378"/>
        <dbReference type="ChEBI" id="CHEBI:29067"/>
        <dbReference type="ChEBI" id="CHEBI:43474"/>
        <dbReference type="ChEBI" id="CHEBI:59918"/>
        <dbReference type="EC" id="3.6.1.7"/>
    </reaction>
</comment>
<comment type="similarity">
    <text evidence="2">Belongs to the acylphosphatase family.</text>
</comment>
<evidence type="ECO:0000255" key="1">
    <source>
        <dbReference type="PROSITE-ProRule" id="PRU00520"/>
    </source>
</evidence>
<evidence type="ECO:0000305" key="2"/>
<proteinExistence type="inferred from homology"/>
<name>ACYP_STRCO</name>
<sequence length="93" mass="10309">MSEDVRLVAWVRGQVQGVGFRWFTRARALELGGMSGFALNLGDGRVQVVAEGPRERCEGLLEWLRGDDTPGRVDGVTEIWDTPRGGYEGFAIR</sequence>
<organism>
    <name type="scientific">Streptomyces coelicolor (strain ATCC BAA-471 / A3(2) / M145)</name>
    <dbReference type="NCBI Taxonomy" id="100226"/>
    <lineage>
        <taxon>Bacteria</taxon>
        <taxon>Bacillati</taxon>
        <taxon>Actinomycetota</taxon>
        <taxon>Actinomycetes</taxon>
        <taxon>Kitasatosporales</taxon>
        <taxon>Streptomycetaceae</taxon>
        <taxon>Streptomyces</taxon>
        <taxon>Streptomyces albidoflavus group</taxon>
    </lineage>
</organism>
<gene>
    <name type="primary">acyP</name>
    <name type="ordered locus">SCO5576</name>
    <name type="ORF">SC7A1.20</name>
</gene>
<reference key="1">
    <citation type="journal article" date="2002" name="Nature">
        <title>Complete genome sequence of the model actinomycete Streptomyces coelicolor A3(2).</title>
        <authorList>
            <person name="Bentley S.D."/>
            <person name="Chater K.F."/>
            <person name="Cerdeno-Tarraga A.-M."/>
            <person name="Challis G.L."/>
            <person name="Thomson N.R."/>
            <person name="James K.D."/>
            <person name="Harris D.E."/>
            <person name="Quail M.A."/>
            <person name="Kieser H."/>
            <person name="Harper D."/>
            <person name="Bateman A."/>
            <person name="Brown S."/>
            <person name="Chandra G."/>
            <person name="Chen C.W."/>
            <person name="Collins M."/>
            <person name="Cronin A."/>
            <person name="Fraser A."/>
            <person name="Goble A."/>
            <person name="Hidalgo J."/>
            <person name="Hornsby T."/>
            <person name="Howarth S."/>
            <person name="Huang C.-H."/>
            <person name="Kieser T."/>
            <person name="Larke L."/>
            <person name="Murphy L.D."/>
            <person name="Oliver K."/>
            <person name="O'Neil S."/>
            <person name="Rabbinowitsch E."/>
            <person name="Rajandream M.A."/>
            <person name="Rutherford K.M."/>
            <person name="Rutter S."/>
            <person name="Seeger K."/>
            <person name="Saunders D."/>
            <person name="Sharp S."/>
            <person name="Squares R."/>
            <person name="Squares S."/>
            <person name="Taylor K."/>
            <person name="Warren T."/>
            <person name="Wietzorrek A."/>
            <person name="Woodward J.R."/>
            <person name="Barrell B.G."/>
            <person name="Parkhill J."/>
            <person name="Hopwood D.A."/>
        </authorList>
    </citation>
    <scope>NUCLEOTIDE SEQUENCE [LARGE SCALE GENOMIC DNA]</scope>
    <source>
        <strain>ATCC BAA-471 / A3(2) / M145</strain>
    </source>
</reference>
<keyword id="KW-0378">Hydrolase</keyword>
<keyword id="KW-1185">Reference proteome</keyword>
<dbReference type="EC" id="3.6.1.7"/>
<dbReference type="EMBL" id="AL939124">
    <property type="protein sequence ID" value="CAA22419.1"/>
    <property type="molecule type" value="Genomic_DNA"/>
</dbReference>
<dbReference type="PIR" id="T35660">
    <property type="entry name" value="T35660"/>
</dbReference>
<dbReference type="RefSeq" id="NP_629711.1">
    <property type="nucleotide sequence ID" value="NC_003888.3"/>
</dbReference>
<dbReference type="RefSeq" id="WP_003973419.1">
    <property type="nucleotide sequence ID" value="NZ_VNID01000011.1"/>
</dbReference>
<dbReference type="SMR" id="Q9ZBQ3"/>
<dbReference type="FunCoup" id="Q9ZBQ3">
    <property type="interactions" value="44"/>
</dbReference>
<dbReference type="STRING" id="100226.gene:17763234"/>
<dbReference type="PaxDb" id="100226-SCO5576"/>
<dbReference type="KEGG" id="sco:SCO5576"/>
<dbReference type="PATRIC" id="fig|100226.15.peg.5665"/>
<dbReference type="eggNOG" id="COG1254">
    <property type="taxonomic scope" value="Bacteria"/>
</dbReference>
<dbReference type="HOGENOM" id="CLU_141932_3_0_11"/>
<dbReference type="InParanoid" id="Q9ZBQ3"/>
<dbReference type="OrthoDB" id="3182027at2"/>
<dbReference type="PhylomeDB" id="Q9ZBQ3"/>
<dbReference type="Proteomes" id="UP000001973">
    <property type="component" value="Chromosome"/>
</dbReference>
<dbReference type="GO" id="GO:0003998">
    <property type="term" value="F:acylphosphatase activity"/>
    <property type="evidence" value="ECO:0007669"/>
    <property type="project" value="UniProtKB-EC"/>
</dbReference>
<dbReference type="Gene3D" id="3.30.70.100">
    <property type="match status" value="1"/>
</dbReference>
<dbReference type="InterPro" id="IPR020456">
    <property type="entry name" value="Acylphosphatase"/>
</dbReference>
<dbReference type="InterPro" id="IPR001792">
    <property type="entry name" value="Acylphosphatase-like_dom"/>
</dbReference>
<dbReference type="InterPro" id="IPR036046">
    <property type="entry name" value="Acylphosphatase-like_dom_sf"/>
</dbReference>
<dbReference type="InterPro" id="IPR017968">
    <property type="entry name" value="Acylphosphatase_CS"/>
</dbReference>
<dbReference type="NCBIfam" id="NF010997">
    <property type="entry name" value="PRK14422.1"/>
    <property type="match status" value="1"/>
</dbReference>
<dbReference type="PANTHER" id="PTHR47268">
    <property type="entry name" value="ACYLPHOSPHATASE"/>
    <property type="match status" value="1"/>
</dbReference>
<dbReference type="PANTHER" id="PTHR47268:SF4">
    <property type="entry name" value="ACYLPHOSPHATASE"/>
    <property type="match status" value="1"/>
</dbReference>
<dbReference type="Pfam" id="PF00708">
    <property type="entry name" value="Acylphosphatase"/>
    <property type="match status" value="1"/>
</dbReference>
<dbReference type="SUPFAM" id="SSF54975">
    <property type="entry name" value="Acylphosphatase/BLUF domain-like"/>
    <property type="match status" value="1"/>
</dbReference>
<dbReference type="PROSITE" id="PS00150">
    <property type="entry name" value="ACYLPHOSPHATASE_1"/>
    <property type="match status" value="1"/>
</dbReference>
<dbReference type="PROSITE" id="PS51160">
    <property type="entry name" value="ACYLPHOSPHATASE_3"/>
    <property type="match status" value="1"/>
</dbReference>
<feature type="chain" id="PRO_0000326821" description="Acylphosphatase">
    <location>
        <begin position="1"/>
        <end position="93"/>
    </location>
</feature>
<feature type="domain" description="Acylphosphatase-like" evidence="1">
    <location>
        <begin position="6"/>
        <end position="93"/>
    </location>
</feature>
<feature type="active site" evidence="1">
    <location>
        <position position="21"/>
    </location>
</feature>
<feature type="active site" evidence="1">
    <location>
        <position position="40"/>
    </location>
</feature>
<accession>Q9ZBQ3</accession>